<dbReference type="EMBL" id="HM627208">
    <property type="protein sequence ID" value="AEH95535.1"/>
    <property type="molecule type" value="mRNA"/>
</dbReference>
<dbReference type="SMR" id="F8RKW5"/>
<dbReference type="GO" id="GO:0030424">
    <property type="term" value="C:axon"/>
    <property type="evidence" value="ECO:0007669"/>
    <property type="project" value="TreeGrafter"/>
</dbReference>
<dbReference type="GO" id="GO:0030425">
    <property type="term" value="C:dendrite"/>
    <property type="evidence" value="ECO:0007669"/>
    <property type="project" value="TreeGrafter"/>
</dbReference>
<dbReference type="GO" id="GO:0005615">
    <property type="term" value="C:extracellular space"/>
    <property type="evidence" value="ECO:0007669"/>
    <property type="project" value="TreeGrafter"/>
</dbReference>
<dbReference type="GO" id="GO:0008021">
    <property type="term" value="C:synaptic vesicle"/>
    <property type="evidence" value="ECO:0007669"/>
    <property type="project" value="TreeGrafter"/>
</dbReference>
<dbReference type="GO" id="GO:0008083">
    <property type="term" value="F:growth factor activity"/>
    <property type="evidence" value="ECO:0007669"/>
    <property type="project" value="UniProtKB-KW"/>
</dbReference>
<dbReference type="GO" id="GO:0008289">
    <property type="term" value="F:lipid binding"/>
    <property type="evidence" value="ECO:0007669"/>
    <property type="project" value="UniProtKB-KW"/>
</dbReference>
<dbReference type="GO" id="GO:0005163">
    <property type="term" value="F:nerve growth factor receptor binding"/>
    <property type="evidence" value="ECO:0007669"/>
    <property type="project" value="TreeGrafter"/>
</dbReference>
<dbReference type="GO" id="GO:0030414">
    <property type="term" value="F:peptidase inhibitor activity"/>
    <property type="evidence" value="ECO:0007669"/>
    <property type="project" value="UniProtKB-KW"/>
</dbReference>
<dbReference type="GO" id="GO:0090729">
    <property type="term" value="F:toxin activity"/>
    <property type="evidence" value="ECO:0007669"/>
    <property type="project" value="UniProtKB-KW"/>
</dbReference>
<dbReference type="GO" id="GO:0007169">
    <property type="term" value="P:cell surface receptor protein tyrosine kinase signaling pathway"/>
    <property type="evidence" value="ECO:0007669"/>
    <property type="project" value="TreeGrafter"/>
</dbReference>
<dbReference type="GO" id="GO:0050804">
    <property type="term" value="P:modulation of chemical synaptic transmission"/>
    <property type="evidence" value="ECO:0007669"/>
    <property type="project" value="TreeGrafter"/>
</dbReference>
<dbReference type="GO" id="GO:0043524">
    <property type="term" value="P:negative regulation of neuron apoptotic process"/>
    <property type="evidence" value="ECO:0007669"/>
    <property type="project" value="TreeGrafter"/>
</dbReference>
<dbReference type="GO" id="GO:0021675">
    <property type="term" value="P:nerve development"/>
    <property type="evidence" value="ECO:0007669"/>
    <property type="project" value="TreeGrafter"/>
</dbReference>
<dbReference type="GO" id="GO:0038180">
    <property type="term" value="P:nerve growth factor signaling pathway"/>
    <property type="evidence" value="ECO:0007669"/>
    <property type="project" value="TreeGrafter"/>
</dbReference>
<dbReference type="GO" id="GO:0048812">
    <property type="term" value="P:neuron projection morphogenesis"/>
    <property type="evidence" value="ECO:0007669"/>
    <property type="project" value="TreeGrafter"/>
</dbReference>
<dbReference type="FunFam" id="2.10.90.10:FF:000002">
    <property type="entry name" value="Brain-derived neurotrophic factor"/>
    <property type="match status" value="1"/>
</dbReference>
<dbReference type="Gene3D" id="2.10.90.10">
    <property type="entry name" value="Cystine-knot cytokines"/>
    <property type="match status" value="1"/>
</dbReference>
<dbReference type="InterPro" id="IPR029034">
    <property type="entry name" value="Cystine-knot_cytokine"/>
</dbReference>
<dbReference type="InterPro" id="IPR020408">
    <property type="entry name" value="Nerve_growth_factor-like"/>
</dbReference>
<dbReference type="InterPro" id="IPR002072">
    <property type="entry name" value="Nerve_growth_factor-rel"/>
</dbReference>
<dbReference type="InterPro" id="IPR020425">
    <property type="entry name" value="Nerve_growth_factor_bsu"/>
</dbReference>
<dbReference type="InterPro" id="IPR019846">
    <property type="entry name" value="Nerve_growth_factor_CS"/>
</dbReference>
<dbReference type="InterPro" id="IPR020433">
    <property type="entry name" value="Venom_nerve_growth_factor"/>
</dbReference>
<dbReference type="PANTHER" id="PTHR11589:SF10">
    <property type="entry name" value="BETA-NERVE GROWTH FACTOR"/>
    <property type="match status" value="1"/>
</dbReference>
<dbReference type="PANTHER" id="PTHR11589">
    <property type="entry name" value="NERVE GROWTH FACTOR NGF -RELATED"/>
    <property type="match status" value="1"/>
</dbReference>
<dbReference type="Pfam" id="PF00243">
    <property type="entry name" value="NGF"/>
    <property type="match status" value="1"/>
</dbReference>
<dbReference type="PIRSF" id="PIRSF001789">
    <property type="entry name" value="NGF"/>
    <property type="match status" value="1"/>
</dbReference>
<dbReference type="PRINTS" id="PR00268">
    <property type="entry name" value="NGF"/>
</dbReference>
<dbReference type="PRINTS" id="PR01913">
    <property type="entry name" value="NGFBETA"/>
</dbReference>
<dbReference type="PRINTS" id="PR01917">
    <property type="entry name" value="VENOMNGF"/>
</dbReference>
<dbReference type="SMART" id="SM00140">
    <property type="entry name" value="NGF"/>
    <property type="match status" value="1"/>
</dbReference>
<dbReference type="SUPFAM" id="SSF57501">
    <property type="entry name" value="Cystine-knot cytokines"/>
    <property type="match status" value="1"/>
</dbReference>
<dbReference type="PROSITE" id="PS00248">
    <property type="entry name" value="NGF_1"/>
    <property type="match status" value="1"/>
</dbReference>
<dbReference type="PROSITE" id="PS50270">
    <property type="entry name" value="NGF_2"/>
    <property type="match status" value="1"/>
</dbReference>
<organism>
    <name type="scientific">Drysdalia coronoides</name>
    <name type="common">White-lipped snake</name>
    <name type="synonym">Hoplocephalus coronoides</name>
    <dbReference type="NCBI Taxonomy" id="66186"/>
    <lineage>
        <taxon>Eukaryota</taxon>
        <taxon>Metazoa</taxon>
        <taxon>Chordata</taxon>
        <taxon>Craniata</taxon>
        <taxon>Vertebrata</taxon>
        <taxon>Euteleostomi</taxon>
        <taxon>Lepidosauria</taxon>
        <taxon>Squamata</taxon>
        <taxon>Bifurcata</taxon>
        <taxon>Unidentata</taxon>
        <taxon>Episquamata</taxon>
        <taxon>Toxicofera</taxon>
        <taxon>Serpentes</taxon>
        <taxon>Colubroidea</taxon>
        <taxon>Elapidae</taxon>
        <taxon>Notechinae</taxon>
        <taxon>Drysdalia</taxon>
    </lineage>
</organism>
<proteinExistence type="evidence at transcript level"/>
<accession>F8RKW5</accession>
<protein>
    <recommendedName>
        <fullName>Venom nerve growth factor</fullName>
        <shortName>v-NGF</shortName>
        <shortName>vNGF</shortName>
    </recommendedName>
</protein>
<comment type="function">
    <text evidence="2 3">Nerve growth factor is important for the development and maintenance of the sympathetic and sensory nervous systems. It stimulates division and differentiation of sympathetic and embryonic sensory neurons as well as basal forebrain cholinergic neurons in the brain. Its relevance in the snake venom is not clear. However, it has been shown to inhibit metalloproteinase-dependent proteolysis of platelet glycoprotein Ib alpha, suggesting a metalloproteinase inhibition to prevent metalloprotease autodigestion and/or protection against prey proteases (By similarity). Binds a lipid between the two protein chains in the homodimer. The lipid-bound form promotes histamine relase from mouse mast cells, contrary to the lipid-free form (By similarity).</text>
</comment>
<comment type="subunit">
    <text evidence="2">Homodimer; non-covalently linked.</text>
</comment>
<comment type="subcellular location">
    <subcellularLocation>
        <location evidence="2">Secreted</location>
    </subcellularLocation>
</comment>
<comment type="tissue specificity">
    <text>Expressed by the venom gland.</text>
</comment>
<comment type="miscellaneous">
    <text evidence="7">The presence of this protein in the venom could not be confirmed.</text>
</comment>
<comment type="similarity">
    <text evidence="6">Belongs to the NGF-beta family.</text>
</comment>
<name>NGFV_DRYCN</name>
<evidence type="ECO:0000250" key="1"/>
<evidence type="ECO:0000250" key="2">
    <source>
        <dbReference type="UniProtKB" id="P61898"/>
    </source>
</evidence>
<evidence type="ECO:0000250" key="3">
    <source>
        <dbReference type="UniProtKB" id="P61899"/>
    </source>
</evidence>
<evidence type="ECO:0000255" key="4"/>
<evidence type="ECO:0000256" key="5">
    <source>
        <dbReference type="SAM" id="MobiDB-lite"/>
    </source>
</evidence>
<evidence type="ECO:0000305" key="6"/>
<evidence type="ECO:0000305" key="7">
    <source>
    </source>
</evidence>
<keyword id="KW-0165">Cleavage on pair of basic residues</keyword>
<keyword id="KW-1015">Disulfide bond</keyword>
<keyword id="KW-0325">Glycoprotein</keyword>
<keyword id="KW-0339">Growth factor</keyword>
<keyword id="KW-0446">Lipid-binding</keyword>
<keyword id="KW-0481">Metalloenzyme inhibitor</keyword>
<keyword id="KW-0483">Metalloprotease inhibitor</keyword>
<keyword id="KW-0646">Protease inhibitor</keyword>
<keyword id="KW-0964">Secreted</keyword>
<keyword id="KW-0732">Signal</keyword>
<keyword id="KW-0800">Toxin</keyword>
<sequence>MSMMCYTLIIAFLIGIWAAPKSEDNVPLGSPATSDLSDTSCAQTHEGLKTSRNTDQRHPAPKKAEDQELGSAANIIVDPKLFQKRRFQSPRVLFSTQPPPLSRDEQSVEFLDNEDTLNRNIRAKRENHPVHNQGEHSVCDSVSDWVIKTTATDIHGNMVTVMGDINFTNEVYKQYFFETKCRNPNPVPSGCRGIDSKVWNSYCTTTQTFVKALTMEGSRASWRFIRIDTACVCVISRKTENF</sequence>
<reference key="1">
    <citation type="journal article" date="2011" name="J. Proteome Res.">
        <title>Identification of novel proteins from the venom of a cryptic snake Drysdalia coronoides by a combined transcriptomics and proteomics approach.</title>
        <authorList>
            <person name="Chatrath S.T."/>
            <person name="Chapeaurouge A."/>
            <person name="Lin Q."/>
            <person name="Lim T.K."/>
            <person name="Dunstan N."/>
            <person name="Mirtschin P."/>
            <person name="Kumar P.P."/>
            <person name="Kini R.M."/>
        </authorList>
    </citation>
    <scope>NUCLEOTIDE SEQUENCE [MRNA]</scope>
    <source>
        <tissue>Venom gland</tissue>
    </source>
</reference>
<feature type="signal peptide" evidence="4">
    <location>
        <begin position="1"/>
        <end position="18"/>
    </location>
</feature>
<feature type="propeptide" id="PRO_0000425462" evidence="1">
    <location>
        <begin position="19"/>
        <end position="125"/>
    </location>
</feature>
<feature type="chain" id="PRO_0000425463" description="Venom nerve growth factor">
    <location>
        <begin position="126"/>
        <end position="242"/>
    </location>
</feature>
<feature type="region of interest" description="Disordered" evidence="5">
    <location>
        <begin position="47"/>
        <end position="70"/>
    </location>
</feature>
<feature type="compositionally biased region" description="Basic and acidic residues" evidence="5">
    <location>
        <begin position="47"/>
        <end position="66"/>
    </location>
</feature>
<feature type="glycosylation site" description="N-linked (GlcNAc...) asparagine" evidence="4">
    <location>
        <position position="166"/>
    </location>
</feature>
<feature type="disulfide bond" evidence="2">
    <location>
        <begin position="139"/>
        <end position="203"/>
    </location>
</feature>
<feature type="disulfide bond" evidence="2">
    <location>
        <begin position="181"/>
        <end position="231"/>
    </location>
</feature>
<feature type="disulfide bond" evidence="2">
    <location>
        <begin position="191"/>
        <end position="233"/>
    </location>
</feature>